<reference key="1">
    <citation type="journal article" date="1998" name="Nature">
        <title>Deciphering the biology of Mycobacterium tuberculosis from the complete genome sequence.</title>
        <authorList>
            <person name="Cole S.T."/>
            <person name="Brosch R."/>
            <person name="Parkhill J."/>
            <person name="Garnier T."/>
            <person name="Churcher C.M."/>
            <person name="Harris D.E."/>
            <person name="Gordon S.V."/>
            <person name="Eiglmeier K."/>
            <person name="Gas S."/>
            <person name="Barry C.E. III"/>
            <person name="Tekaia F."/>
            <person name="Badcock K."/>
            <person name="Basham D."/>
            <person name="Brown D."/>
            <person name="Chillingworth T."/>
            <person name="Connor R."/>
            <person name="Davies R.M."/>
            <person name="Devlin K."/>
            <person name="Feltwell T."/>
            <person name="Gentles S."/>
            <person name="Hamlin N."/>
            <person name="Holroyd S."/>
            <person name="Hornsby T."/>
            <person name="Jagels K."/>
            <person name="Krogh A."/>
            <person name="McLean J."/>
            <person name="Moule S."/>
            <person name="Murphy L.D."/>
            <person name="Oliver S."/>
            <person name="Osborne J."/>
            <person name="Quail M.A."/>
            <person name="Rajandream M.A."/>
            <person name="Rogers J."/>
            <person name="Rutter S."/>
            <person name="Seeger K."/>
            <person name="Skelton S."/>
            <person name="Squares S."/>
            <person name="Squares R."/>
            <person name="Sulston J.E."/>
            <person name="Taylor K."/>
            <person name="Whitehead S."/>
            <person name="Barrell B.G."/>
        </authorList>
    </citation>
    <scope>NUCLEOTIDE SEQUENCE [LARGE SCALE GENOMIC DNA]</scope>
    <source>
        <strain>ATCC 25618 / H37Rv</strain>
    </source>
</reference>
<reference key="2">
    <citation type="journal article" date="2022" name="Microbiology">
        <title>A NiCoT family metal transporter of Mycobacterium tuberculosis (Rv2856/NicT) behaves as a drug efflux pump that facilitates cross-resistance to antibiotics.</title>
        <authorList>
            <person name="Adhikary A."/>
            <person name="Biswal S."/>
            <person name="Chatterjee D."/>
            <person name="Ghosh A.S."/>
        </authorList>
    </citation>
    <scope>FUNCTION</scope>
    <scope>TRANSPORTER ACTIVITY</scope>
    <scope>ACTIVITY REGULATION</scope>
    <scope>MUTAGENESIS OF HIS-77; ASP-82; HIS-83 AND ASP-227</scope>
    <source>
        <strain>H37Rv</strain>
    </source>
</reference>
<proteinExistence type="evidence at protein level"/>
<protein>
    <recommendedName>
        <fullName evidence="4">Nickel transporter NicT</fullName>
    </recommendedName>
    <alternativeName>
        <fullName evidence="4">Drug efflux pump NicT</fullName>
    </alternativeName>
</protein>
<organism>
    <name type="scientific">Mycobacterium tuberculosis (strain ATCC 25618 / H37Rv)</name>
    <dbReference type="NCBI Taxonomy" id="83332"/>
    <lineage>
        <taxon>Bacteria</taxon>
        <taxon>Bacillati</taxon>
        <taxon>Actinomycetota</taxon>
        <taxon>Actinomycetes</taxon>
        <taxon>Mycobacteriales</taxon>
        <taxon>Mycobacteriaceae</taxon>
        <taxon>Mycobacterium</taxon>
        <taxon>Mycobacterium tuberculosis complex</taxon>
    </lineage>
</organism>
<dbReference type="EMBL" id="AL123456">
    <property type="protein sequence ID" value="CCP45657.1"/>
    <property type="molecule type" value="Genomic_DNA"/>
</dbReference>
<dbReference type="RefSeq" id="NP_217372.1">
    <property type="nucleotide sequence ID" value="NC_000962.3"/>
</dbReference>
<dbReference type="RefSeq" id="WP_003414559.1">
    <property type="nucleotide sequence ID" value="NZ_NVQJ01000006.1"/>
</dbReference>
<dbReference type="STRING" id="83332.Rv2856"/>
<dbReference type="CARD" id="ARO:3007659">
    <property type="molecule name" value="Rv2856"/>
    <property type="mechanism identifier" value="ARO:0010000"/>
    <property type="mechanism name" value="antibiotic efflux"/>
</dbReference>
<dbReference type="PaxDb" id="83332-Rv2856"/>
<dbReference type="DNASU" id="888643"/>
<dbReference type="GeneID" id="888643"/>
<dbReference type="KEGG" id="mtu:Rv2856"/>
<dbReference type="KEGG" id="mtv:RVBD_2856"/>
<dbReference type="PATRIC" id="fig|83332.111.peg.3175"/>
<dbReference type="TubercuList" id="Rv2856"/>
<dbReference type="eggNOG" id="COG3376">
    <property type="taxonomic scope" value="Bacteria"/>
</dbReference>
<dbReference type="InParanoid" id="I6YEJ7"/>
<dbReference type="OrthoDB" id="9776706at2"/>
<dbReference type="PhylomeDB" id="I6YEJ7"/>
<dbReference type="Proteomes" id="UP000001584">
    <property type="component" value="Chromosome"/>
</dbReference>
<dbReference type="GO" id="GO:0005886">
    <property type="term" value="C:plasma membrane"/>
    <property type="evidence" value="ECO:0007669"/>
    <property type="project" value="UniProtKB-SubCell"/>
</dbReference>
<dbReference type="GO" id="GO:0044750">
    <property type="term" value="F:high-affinity nickel cation transmembrane transporter activity"/>
    <property type="evidence" value="ECO:0000318"/>
    <property type="project" value="GO_Central"/>
</dbReference>
<dbReference type="GO" id="GO:0098716">
    <property type="term" value="P:nickel cation import across plasma membrane"/>
    <property type="evidence" value="ECO:0000318"/>
    <property type="project" value="GO_Central"/>
</dbReference>
<dbReference type="GO" id="GO:0046677">
    <property type="term" value="P:response to antibiotic"/>
    <property type="evidence" value="ECO:0007669"/>
    <property type="project" value="UniProtKB-KW"/>
</dbReference>
<dbReference type="InterPro" id="IPR004688">
    <property type="entry name" value="Ni/Co_transpt"/>
</dbReference>
<dbReference type="InterPro" id="IPR011541">
    <property type="entry name" value="Ni/Co_transpt_high_affinity"/>
</dbReference>
<dbReference type="NCBIfam" id="TIGR00802">
    <property type="entry name" value="nico"/>
    <property type="match status" value="1"/>
</dbReference>
<dbReference type="PANTHER" id="PTHR31611">
    <property type="entry name" value="HIGH-AFFINITY NICKEL TRANSPORT PROTEIN NIC1"/>
    <property type="match status" value="1"/>
</dbReference>
<dbReference type="PANTHER" id="PTHR31611:SF0">
    <property type="entry name" value="HIGH-AFFINITY NICKEL TRANSPORT PROTEIN NIC1"/>
    <property type="match status" value="1"/>
</dbReference>
<dbReference type="Pfam" id="PF03824">
    <property type="entry name" value="NicO"/>
    <property type="match status" value="1"/>
</dbReference>
<evidence type="ECO:0000255" key="1"/>
<evidence type="ECO:0000269" key="2">
    <source>
    </source>
</evidence>
<evidence type="ECO:0000303" key="3">
    <source>
    </source>
</evidence>
<evidence type="ECO:0000305" key="4"/>
<evidence type="ECO:0000312" key="5">
    <source>
        <dbReference type="EMBL" id="CCP45657.1"/>
    </source>
</evidence>
<comment type="function">
    <text evidence="2">Involved in nickel uptake (PubMed:36282241). In addition, acts as a drug efflux pump and contributes to moderate tolerance towards different classes of antibiotics, including fluoroquinolones, aminoglycosides and the anti-TB drug isoniazid, with a preference for fluoroquinolones (PubMed:36282241). The drug efflux function is probably dependent on proton motive force (pmf) or ion gradient, and might be facilitated by the presence of Ni(2+) ions (PubMed:36282241).</text>
</comment>
<comment type="catalytic activity">
    <reaction evidence="2">
        <text>Ni(2+)(in) = Ni(2+)(out)</text>
        <dbReference type="Rhea" id="RHEA:29831"/>
        <dbReference type="ChEBI" id="CHEBI:49786"/>
    </reaction>
    <physiologicalReaction direction="right-to-left" evidence="2">
        <dbReference type="Rhea" id="RHEA:29833"/>
    </physiologicalReaction>
</comment>
<comment type="activity regulation">
    <text evidence="2">Export of the fluoroquinolone antibiotic norfloxacin is inhibited by the proton ionophore carbonyl cyanide m-chlorophenylhydrazone (CCCP) (PubMed:36282241). Nickel may influence the extrusion of antibiotics possibly by facilitating the proton motive force-dependent efflux process (PubMed:36282241).</text>
</comment>
<comment type="subcellular location">
    <subcellularLocation>
        <location evidence="4">Cell membrane</location>
        <topology evidence="1">Multi-pass membrane protein</topology>
    </subcellularLocation>
</comment>
<comment type="miscellaneous">
    <text evidence="2">Overexpression of NicT in E.coli and M.smegmatis enhances tolerance towards several antibiotics (norfloxacin, sparfloxacin, ofloxacin, gentamicin, nalidixic acid and isoniazid).</text>
</comment>
<comment type="similarity">
    <text evidence="4">Belongs to the NiCoT transporter (TC 2.A.52) family.</text>
</comment>
<sequence length="372" mass="40534">MASSQLDRQRSRSAKMNRALTAAEWWRLGLMFAVIVALHLVGWLTVTLLVEPARLSLGGKAFGIGVGLTAYTLGLRHAFDADHIAAIDNTTRKLMSDGHRPLAVGFFFSLGHSTVVFGLAVMLVTGLKAIVGPVENDSSTLHHYTGLIGTSISGAFLYLIGILNVIVLVGIVRVFAHLRRGDYDEAELEQQLDNRGLLIRFLGRFTKSLTKSWHMYPVGFLFGLGFDTATEIALLVLAGTSAAAGLPWYAILCLPVLFAAGMCLLDTIDGSFMNFAYGWAFSSPVRKIYYNITVTGLSVAVALLIGSVELLGLIANQLGWQGPFWDWLGGLDLNTVGFVVVAMFALTWAIALLVWHYGRVEERWTPAPDRTT</sequence>
<name>NICT_MYCTU</name>
<gene>
    <name evidence="3" type="primary">nicT</name>
    <name evidence="5" type="ordered locus">Rv2856</name>
</gene>
<keyword id="KW-0046">Antibiotic resistance</keyword>
<keyword id="KW-1003">Cell membrane</keyword>
<keyword id="KW-0406">Ion transport</keyword>
<keyword id="KW-0472">Membrane</keyword>
<keyword id="KW-0533">Nickel</keyword>
<keyword id="KW-0921">Nickel transport</keyword>
<keyword id="KW-1185">Reference proteome</keyword>
<keyword id="KW-0812">Transmembrane</keyword>
<keyword id="KW-1133">Transmembrane helix</keyword>
<keyword id="KW-0813">Transport</keyword>
<accession>I6YEJ7</accession>
<feature type="chain" id="PRO_0000457478" description="Nickel transporter NicT">
    <location>
        <begin position="1"/>
        <end position="372"/>
    </location>
</feature>
<feature type="transmembrane region" description="Helical" evidence="1">
    <location>
        <begin position="30"/>
        <end position="50"/>
    </location>
</feature>
<feature type="transmembrane region" description="Helical" evidence="1">
    <location>
        <begin position="55"/>
        <end position="75"/>
    </location>
</feature>
<feature type="transmembrane region" description="Helical" evidence="1">
    <location>
        <begin position="104"/>
        <end position="124"/>
    </location>
</feature>
<feature type="transmembrane region" description="Helical" evidence="1">
    <location>
        <begin position="152"/>
        <end position="172"/>
    </location>
</feature>
<feature type="transmembrane region" description="Helical" evidence="1">
    <location>
        <begin position="218"/>
        <end position="238"/>
    </location>
</feature>
<feature type="transmembrane region" description="Helical" evidence="1">
    <location>
        <begin position="245"/>
        <end position="265"/>
    </location>
</feature>
<feature type="transmembrane region" description="Helical" evidence="1">
    <location>
        <begin position="294"/>
        <end position="314"/>
    </location>
</feature>
<feature type="transmembrane region" description="Helical" evidence="1">
    <location>
        <begin position="335"/>
        <end position="355"/>
    </location>
</feature>
<feature type="mutagenesis site" description="23% decrease of nickel uptake. Decreases or abolishes resistance against several antibiotics." evidence="2">
    <original>H</original>
    <variation>I</variation>
    <location>
        <position position="77"/>
    </location>
</feature>
<feature type="mutagenesis site" description="66% decrease of nickel uptake. Decreases or abolishes resistance against several antibiotics." evidence="2">
    <original>D</original>
    <variation>I</variation>
    <location>
        <position position="82"/>
    </location>
</feature>
<feature type="mutagenesis site" description="65% decrease of nickel uptake. Decreases or abolishes resistance against several antibiotics." evidence="2">
    <original>H</original>
    <variation>L</variation>
    <location>
        <position position="83"/>
    </location>
</feature>
<feature type="mutagenesis site" description="92% decrease of nickel uptake. Decreases or abolishes resistance against several antibiotics." evidence="2">
    <original>D</original>
    <variation>I</variation>
    <location>
        <position position="227"/>
    </location>
</feature>